<comment type="function">
    <text evidence="4 7 8 9 10 15">Mitochondrial chaperone that plays a key role in mitochondrial protein import, folding, and assembly. Plays an essential role in the protein quality control system, the correct folding of proteins, the re-folding of misfolded proteins, and the targeting of proteins for subsequent degradation. These processes are achieved through cycles of ATP binding, ATP hydrolysis, and ADP release, mediated by co-chaperones. In mitochondria, it associates with the TIM (translocase of the inner membrane) protein complex to assist in the import and folding of mitochondrial proteins (By similarity). Plays an important role in mitochondrial iron-sulfur cluster (ISC) biogenesis (PubMed:26702583). Interacts with and stabilizes ISC cluster assembly proteins FXN, NFU1, NFS1 and ISCU (PubMed:21123823). Regulates erythropoiesis via stabilization of ISC assembly (PubMed:21123823). Regulates mitochondrial calcium-dependent apoptosis by coupling two calcium channels, ITPR1 and VDAC1, at the mitochondria-associated endoplasmic reticulum (ER) membrane to facilitate calcium transport from the ER lumen to the mitochondria intermembrane space, providing calcium for the downstream calcium channel MCU, which releases it into the mitochondrial matrix (PubMed:29907098). Although primarily located in the mitochondria, it is also found in other cellular compartments. In the cytosol, it associates with proteins involved in signaling, apoptosis, or senescence. It may play a role in cell cycle regulation via its interaction with and promotion of degradation of TP53 (By similarity). May play a role in the control of cell proliferation and cellular aging (PubMed:21123823, PubMed:26702583, PubMed:8454632). Protects against reactive oxygen species (ROS) (PubMed:24243970). Extracellular HSPA9 plays a cytoprotective role by preventing cell lysis following immune attack by the membrane attack complex by disrupting formation of the complex (By similarity).</text>
</comment>
<comment type="catalytic activity">
    <reaction evidence="4">
        <text>ATP + H2O = ADP + phosphate + H(+)</text>
        <dbReference type="Rhea" id="RHEA:13065"/>
        <dbReference type="ChEBI" id="CHEBI:15377"/>
        <dbReference type="ChEBI" id="CHEBI:15378"/>
        <dbReference type="ChEBI" id="CHEBI:30616"/>
        <dbReference type="ChEBI" id="CHEBI:43474"/>
        <dbReference type="ChEBI" id="CHEBI:456216"/>
        <dbReference type="EC" id="3.6.4.10"/>
    </reaction>
    <physiologicalReaction direction="left-to-right" evidence="4">
        <dbReference type="Rhea" id="RHEA:13066"/>
    </physiologicalReaction>
</comment>
<comment type="activity regulation">
    <text evidence="3 4">The chaperone activity is regulated by ATP-induced allosteric coupling of the nucleotide-binding (NBD) and substrate-binding (SBD) domains. ATP binding in the NBD leads to a conformational change in the NBD, which is transferred through the interdomain linker (IDL) to the substrate-binding domain (SBD). This elicits a reduced substrate affinity and a faster substrate exchange rate. Upon hydrolysis of ATP to ADP, the protein undergoes a conformational change that increases its affinity for substrate proteins. It cycles through repeated phases of ATP hydrolysis and nucleotide exchange, facilitating repeated cycles of substrate binding and release (By similarity). Functions in collaboration with co-chaperones. Functions with the co-chaperone, DNLZ, to maintain solubility and regulate ATP hydrolysis. Nucleotide exchange factors, GRPEL1 and GRPEL2, accelerate nucleotide exchange (By similarity).</text>
</comment>
<comment type="subunit">
    <text evidence="4 10">Interacts strongly with the intermediate form of FXN and weakly with its mature form. Interacts with HSCB. Associates with the mitochondrial contact site and cristae organizing system (MICOS) complex, composed of at least MICOS10/MIC10, CHCHD3/MIC19, CHCHD6/MIC25, APOOL/MIC27, IMMT/MIC60, APOO/MIC23/MIC26 and QIL1/MIC13. This complex was also known under the names MINOS or MitOS complex. The MICOS complex associates with mitochondrial outer membrane proteins SAMM50, MTX1, MTX2 and DNAJC11, mitochondrial inner membrane protein TMEM11 and with HSPA9. Interacts with DNLZ, the interaction is required to prevent self-aggregation. Interacts with TESPA1. Interacts with PDPN. Interacts with NFU1, NFS1 and ISCU. Interacts with TP53; the interaction promotes TP53 degradation (By similarity). Interacts (via SBD domain) with UBXN2A; the interaction with UBXN2A inhibits HSPA9/MOT-2 interaction with and degradation of TP53, thereby promotes TP53 translocation to the nucleus (By similarity). Interacts with ITPR1 AND VDAC1; this interaction couples ITPR1 to VDAC1 (PubMed:29907098). Component of the TIM23 mitochondrial inner membrane pre-sequence translocase complex (By similarity).</text>
</comment>
<comment type="subcellular location">
    <subcellularLocation>
        <location evidence="14">Mitochondrion</location>
    </subcellularLocation>
    <subcellularLocation>
        <location evidence="4">Nucleus</location>
        <location evidence="4">Nucleolus</location>
    </subcellularLocation>
    <subcellularLocation>
        <location evidence="15">Cytoplasm</location>
    </subcellularLocation>
    <subcellularLocation>
        <location evidence="5">Mitochondrion matrix</location>
    </subcellularLocation>
    <text evidence="5 10">Found in a complex with HSPA9 and VDAC1 at the endoplasmic reticulum-mitochondria contact sites.</text>
</comment>
<comment type="developmental stage">
    <text evidence="15">Expressed in embryonic fibroblasts (at protein level).</text>
</comment>
<comment type="induction">
    <text evidence="12 15">Not induced by heat shock, instead protein abundance is decreased.</text>
</comment>
<comment type="domain">
    <text evidence="2">The N-terminal nucleotide binding domain (NBD) is responsible for binding and hydrolyzing ATP. The C-terminal substrate-binding domain (SBD) binds to the client/substrate proteins. The two domains are allosterically coupled so that, when ATP is bound to the NBD, the SBD binds relatively weakly to clients. When ADP is bound in the NBD, a conformational change enhances the affinity of the SBD for client proteins.</text>
</comment>
<comment type="polymorphism">
    <text evidence="15">Two forms of the protein have been found, MOT-1, found in mortal cells and MOT-2, found in immortal cells. The sequence of MOT-2 is shown here.</text>
</comment>
<comment type="similarity">
    <text evidence="17">Belongs to the heat shock protein 70 family.</text>
</comment>
<reference key="1">
    <citation type="journal article" date="1993" name="J. Biol. Chem.">
        <title>Identification of a novel member of mouse hsp70 family. Its association with cellular mortal phenotype.</title>
        <authorList>
            <person name="Wadhwa R."/>
            <person name="Kaul S.C."/>
            <person name="Ikawa Y."/>
            <person name="Sugimoto Y."/>
        </authorList>
    </citation>
    <scope>NUCLEOTIDE SEQUENCE [MRNA]</scope>
    <scope>FUNCTION</scope>
    <scope>SUBCELLULAR LOCATION</scope>
    <scope>DEVELOPMENTAL STAGE</scope>
    <scope>INDUCTION</scope>
    <source>
        <strain>CD-1 X ICR</strain>
        <tissue>Embryonic fibroblast</tissue>
    </source>
</reference>
<reference key="2">
    <citation type="submission" date="1999-08" db="EMBL/GenBank/DDBJ databases">
        <authorList>
            <person name="Wadhwa R."/>
        </authorList>
    </citation>
    <scope>SEQUENCE REVISION TO 123</scope>
</reference>
<reference key="3">
    <citation type="journal article" date="1993" name="J. Biol. Chem.">
        <title>Induction of cellular senescence by transfection of cytosolic mortalin cDNA in NIH 3T3 cells.</title>
        <authorList>
            <person name="Wadhwa R."/>
            <person name="Kaul S.C."/>
            <person name="Sugimoto Y."/>
            <person name="Mitsui Y."/>
        </authorList>
    </citation>
    <scope>NUCLEOTIDE SEQUENCE [MRNA]</scope>
    <scope>POLYMORPHISM</scope>
    <source>
        <strain>CD-1 X ICR</strain>
        <tissue>Embryonic fibroblast</tissue>
    </source>
</reference>
<reference key="4">
    <citation type="journal article" date="1993" name="Mol. Cell. Biol.">
        <title>Cloning of the gene encoding peptide-binding protein 74 shows that it is a new member of the heat shock protein 70 family.</title>
        <authorList>
            <person name="Domanico S.Z."/>
            <person name="Denagel D.C."/>
            <person name="Dahlseid J.N."/>
            <person name="Green J.M."/>
            <person name="Pierce S.K."/>
        </authorList>
    </citation>
    <scope>NUCLEOTIDE SEQUENCE [MRNA]</scope>
    <scope>PARTIAL PROTEIN SEQUENCE</scope>
    <scope>INDUCTION</scope>
    <source>
        <tissue>B-cell</tissue>
    </source>
</reference>
<reference key="5">
    <citation type="journal article" date="1993" name="FEBS Lett.">
        <title>Structure and organization of the gene encoding a mouse mitochondrial stress-70 protein.</title>
        <authorList>
            <person name="Michikawa Y."/>
            <person name="Baba T."/>
            <person name="Arai Y."/>
            <person name="Sakakura T."/>
            <person name="Kusakabe M."/>
        </authorList>
    </citation>
    <scope>NUCLEOTIDE SEQUENCE [GENOMIC DNA]</scope>
    <source>
        <strain>BALB/cJ</strain>
        <tissue>Liver</tissue>
    </source>
</reference>
<reference key="6">
    <citation type="journal article" date="1993" name="Biochem. Biophys. Res. Commun.">
        <title>Antigenic protein specific for C3H strain mouse is a mitochondrial stress-70 protein.</title>
        <authorList>
            <person name="Michikawa Y."/>
            <person name="Baba T."/>
            <person name="Arai Y."/>
            <person name="Sakakura T."/>
            <person name="Tanaka M."/>
            <person name="Kusakabe M."/>
        </authorList>
    </citation>
    <scope>NUCLEOTIDE SEQUENCE [MRNA]</scope>
    <source>
        <strain>C3H/HeN</strain>
        <tissue>Kidney</tissue>
    </source>
</reference>
<reference key="7">
    <citation type="journal article" date="2005" name="Science">
        <title>The transcriptional landscape of the mammalian genome.</title>
        <authorList>
            <person name="Carninci P."/>
            <person name="Kasukawa T."/>
            <person name="Katayama S."/>
            <person name="Gough J."/>
            <person name="Frith M.C."/>
            <person name="Maeda N."/>
            <person name="Oyama R."/>
            <person name="Ravasi T."/>
            <person name="Lenhard B."/>
            <person name="Wells C."/>
            <person name="Kodzius R."/>
            <person name="Shimokawa K."/>
            <person name="Bajic V.B."/>
            <person name="Brenner S.E."/>
            <person name="Batalov S."/>
            <person name="Forrest A.R."/>
            <person name="Zavolan M."/>
            <person name="Davis M.J."/>
            <person name="Wilming L.G."/>
            <person name="Aidinis V."/>
            <person name="Allen J.E."/>
            <person name="Ambesi-Impiombato A."/>
            <person name="Apweiler R."/>
            <person name="Aturaliya R.N."/>
            <person name="Bailey T.L."/>
            <person name="Bansal M."/>
            <person name="Baxter L."/>
            <person name="Beisel K.W."/>
            <person name="Bersano T."/>
            <person name="Bono H."/>
            <person name="Chalk A.M."/>
            <person name="Chiu K.P."/>
            <person name="Choudhary V."/>
            <person name="Christoffels A."/>
            <person name="Clutterbuck D.R."/>
            <person name="Crowe M.L."/>
            <person name="Dalla E."/>
            <person name="Dalrymple B.P."/>
            <person name="de Bono B."/>
            <person name="Della Gatta G."/>
            <person name="di Bernardo D."/>
            <person name="Down T."/>
            <person name="Engstrom P."/>
            <person name="Fagiolini M."/>
            <person name="Faulkner G."/>
            <person name="Fletcher C.F."/>
            <person name="Fukushima T."/>
            <person name="Furuno M."/>
            <person name="Futaki S."/>
            <person name="Gariboldi M."/>
            <person name="Georgii-Hemming P."/>
            <person name="Gingeras T.R."/>
            <person name="Gojobori T."/>
            <person name="Green R.E."/>
            <person name="Gustincich S."/>
            <person name="Harbers M."/>
            <person name="Hayashi Y."/>
            <person name="Hensch T.K."/>
            <person name="Hirokawa N."/>
            <person name="Hill D."/>
            <person name="Huminiecki L."/>
            <person name="Iacono M."/>
            <person name="Ikeo K."/>
            <person name="Iwama A."/>
            <person name="Ishikawa T."/>
            <person name="Jakt M."/>
            <person name="Kanapin A."/>
            <person name="Katoh M."/>
            <person name="Kawasawa Y."/>
            <person name="Kelso J."/>
            <person name="Kitamura H."/>
            <person name="Kitano H."/>
            <person name="Kollias G."/>
            <person name="Krishnan S.P."/>
            <person name="Kruger A."/>
            <person name="Kummerfeld S.K."/>
            <person name="Kurochkin I.V."/>
            <person name="Lareau L.F."/>
            <person name="Lazarevic D."/>
            <person name="Lipovich L."/>
            <person name="Liu J."/>
            <person name="Liuni S."/>
            <person name="McWilliam S."/>
            <person name="Madan Babu M."/>
            <person name="Madera M."/>
            <person name="Marchionni L."/>
            <person name="Matsuda H."/>
            <person name="Matsuzawa S."/>
            <person name="Miki H."/>
            <person name="Mignone F."/>
            <person name="Miyake S."/>
            <person name="Morris K."/>
            <person name="Mottagui-Tabar S."/>
            <person name="Mulder N."/>
            <person name="Nakano N."/>
            <person name="Nakauchi H."/>
            <person name="Ng P."/>
            <person name="Nilsson R."/>
            <person name="Nishiguchi S."/>
            <person name="Nishikawa S."/>
            <person name="Nori F."/>
            <person name="Ohara O."/>
            <person name="Okazaki Y."/>
            <person name="Orlando V."/>
            <person name="Pang K.C."/>
            <person name="Pavan W.J."/>
            <person name="Pavesi G."/>
            <person name="Pesole G."/>
            <person name="Petrovsky N."/>
            <person name="Piazza S."/>
            <person name="Reed J."/>
            <person name="Reid J.F."/>
            <person name="Ring B.Z."/>
            <person name="Ringwald M."/>
            <person name="Rost B."/>
            <person name="Ruan Y."/>
            <person name="Salzberg S.L."/>
            <person name="Sandelin A."/>
            <person name="Schneider C."/>
            <person name="Schoenbach C."/>
            <person name="Sekiguchi K."/>
            <person name="Semple C.A."/>
            <person name="Seno S."/>
            <person name="Sessa L."/>
            <person name="Sheng Y."/>
            <person name="Shibata Y."/>
            <person name="Shimada H."/>
            <person name="Shimada K."/>
            <person name="Silva D."/>
            <person name="Sinclair B."/>
            <person name="Sperling S."/>
            <person name="Stupka E."/>
            <person name="Sugiura K."/>
            <person name="Sultana R."/>
            <person name="Takenaka Y."/>
            <person name="Taki K."/>
            <person name="Tammoja K."/>
            <person name="Tan S.L."/>
            <person name="Tang S."/>
            <person name="Taylor M.S."/>
            <person name="Tegner J."/>
            <person name="Teichmann S.A."/>
            <person name="Ueda H.R."/>
            <person name="van Nimwegen E."/>
            <person name="Verardo R."/>
            <person name="Wei C.L."/>
            <person name="Yagi K."/>
            <person name="Yamanishi H."/>
            <person name="Zabarovsky E."/>
            <person name="Zhu S."/>
            <person name="Zimmer A."/>
            <person name="Hide W."/>
            <person name="Bult C."/>
            <person name="Grimmond S.M."/>
            <person name="Teasdale R.D."/>
            <person name="Liu E.T."/>
            <person name="Brusic V."/>
            <person name="Quackenbush J."/>
            <person name="Wahlestedt C."/>
            <person name="Mattick J.S."/>
            <person name="Hume D.A."/>
            <person name="Kai C."/>
            <person name="Sasaki D."/>
            <person name="Tomaru Y."/>
            <person name="Fukuda S."/>
            <person name="Kanamori-Katayama M."/>
            <person name="Suzuki M."/>
            <person name="Aoki J."/>
            <person name="Arakawa T."/>
            <person name="Iida J."/>
            <person name="Imamura K."/>
            <person name="Itoh M."/>
            <person name="Kato T."/>
            <person name="Kawaji H."/>
            <person name="Kawagashira N."/>
            <person name="Kawashima T."/>
            <person name="Kojima M."/>
            <person name="Kondo S."/>
            <person name="Konno H."/>
            <person name="Nakano K."/>
            <person name="Ninomiya N."/>
            <person name="Nishio T."/>
            <person name="Okada M."/>
            <person name="Plessy C."/>
            <person name="Shibata K."/>
            <person name="Shiraki T."/>
            <person name="Suzuki S."/>
            <person name="Tagami M."/>
            <person name="Waki K."/>
            <person name="Watahiki A."/>
            <person name="Okamura-Oho Y."/>
            <person name="Suzuki H."/>
            <person name="Kawai J."/>
            <person name="Hayashizaki Y."/>
        </authorList>
    </citation>
    <scope>NUCLEOTIDE SEQUENCE [LARGE SCALE MRNA]</scope>
    <source>
        <strain>C57BL/6J</strain>
        <strain>DBA/2J</strain>
        <tissue>Embryo</tissue>
        <tissue>Kidney</tissue>
        <tissue>Liver</tissue>
    </source>
</reference>
<reference key="8">
    <citation type="journal article" date="2009" name="PLoS Biol.">
        <title>Lineage-specific biology revealed by a finished genome assembly of the mouse.</title>
        <authorList>
            <person name="Church D.M."/>
            <person name="Goodstadt L."/>
            <person name="Hillier L.W."/>
            <person name="Zody M.C."/>
            <person name="Goldstein S."/>
            <person name="She X."/>
            <person name="Bult C.J."/>
            <person name="Agarwala R."/>
            <person name="Cherry J.L."/>
            <person name="DiCuccio M."/>
            <person name="Hlavina W."/>
            <person name="Kapustin Y."/>
            <person name="Meric P."/>
            <person name="Maglott D."/>
            <person name="Birtle Z."/>
            <person name="Marques A.C."/>
            <person name="Graves T."/>
            <person name="Zhou S."/>
            <person name="Teague B."/>
            <person name="Potamousis K."/>
            <person name="Churas C."/>
            <person name="Place M."/>
            <person name="Herschleb J."/>
            <person name="Runnheim R."/>
            <person name="Forrest D."/>
            <person name="Amos-Landgraf J."/>
            <person name="Schwartz D.C."/>
            <person name="Cheng Z."/>
            <person name="Lindblad-Toh K."/>
            <person name="Eichler E.E."/>
            <person name="Ponting C.P."/>
        </authorList>
    </citation>
    <scope>NUCLEOTIDE SEQUENCE [LARGE SCALE GENOMIC DNA]</scope>
    <source>
        <strain>C57BL/6J</strain>
    </source>
</reference>
<reference key="9">
    <citation type="submission" date="2005-07" db="EMBL/GenBank/DDBJ databases">
        <authorList>
            <person name="Mural R.J."/>
            <person name="Adams M.D."/>
            <person name="Myers E.W."/>
            <person name="Smith H.O."/>
            <person name="Venter J.C."/>
        </authorList>
    </citation>
    <scope>NUCLEOTIDE SEQUENCE [LARGE SCALE GENOMIC DNA]</scope>
</reference>
<reference key="10">
    <citation type="journal article" date="2004" name="Genome Res.">
        <title>The status, quality, and expansion of the NIH full-length cDNA project: the Mammalian Gene Collection (MGC).</title>
        <authorList>
            <consortium name="The MGC Project Team"/>
        </authorList>
    </citation>
    <scope>NUCLEOTIDE SEQUENCE [LARGE SCALE MRNA]</scope>
    <source>
        <strain>C57BL/6J</strain>
        <tissue>Brain</tissue>
    </source>
</reference>
<reference key="11">
    <citation type="journal article" date="1994" name="Electrophoresis">
        <title>Separation and sequencing of familiar and novel murine proteins using preparative two-dimensional gel electrophoresis.</title>
        <authorList>
            <person name="Merrick B.A."/>
            <person name="Patterson R.M."/>
            <person name="Wichter L.L."/>
            <person name="He C."/>
            <person name="Selkirk J.K."/>
        </authorList>
    </citation>
    <scope>PROTEIN SEQUENCE OF 47-70</scope>
    <source>
        <tissue>Fibroblast</tissue>
    </source>
</reference>
<reference key="12">
    <citation type="submission" date="2007-07" db="UniProtKB">
        <authorList>
            <person name="Lubec G."/>
            <person name="Klug S."/>
            <person name="Yang J.W."/>
            <person name="Zigmond M."/>
        </authorList>
    </citation>
    <scope>PROTEIN SEQUENCE OF 188-202; 266-284; 349-360; 395-405 AND 499-513</scope>
    <scope>IDENTIFICATION BY MASS SPECTROMETRY</scope>
    <source>
        <tissue>Brain</tissue>
        <tissue>Hippocampus</tissue>
    </source>
</reference>
<reference key="13">
    <citation type="journal article" date="1994" name="Mol. Biol. Cell">
        <title>PBP74, a new member of the mammalian 70-kDa heat shock protein family, is a mitochondrial protein.</title>
        <authorList>
            <person name="Dahlseid J.N."/>
            <person name="Lill R."/>
            <person name="Green J.M."/>
            <person name="Xu X."/>
            <person name="Qiu Y."/>
            <person name="Pierce S.K."/>
        </authorList>
    </citation>
    <scope>SUBCELLULAR LOCATION</scope>
</reference>
<reference key="14">
    <citation type="journal article" date="2010" name="Cell">
        <title>A tissue-specific atlas of mouse protein phosphorylation and expression.</title>
        <authorList>
            <person name="Huttlin E.L."/>
            <person name="Jedrychowski M.P."/>
            <person name="Elias J.E."/>
            <person name="Goswami T."/>
            <person name="Rad R."/>
            <person name="Beausoleil S.A."/>
            <person name="Villen J."/>
            <person name="Haas W."/>
            <person name="Sowa M.E."/>
            <person name="Gygi S.P."/>
        </authorList>
    </citation>
    <scope>IDENTIFICATION BY MASS SPECTROMETRY [LARGE SCALE ANALYSIS]</scope>
    <source>
        <tissue>Brain</tissue>
        <tissue>Brown adipose tissue</tissue>
        <tissue>Heart</tissue>
        <tissue>Kidney</tissue>
        <tissue>Liver</tissue>
        <tissue>Lung</tissue>
        <tissue>Pancreas</tissue>
        <tissue>Spleen</tissue>
        <tissue>Testis</tissue>
    </source>
</reference>
<reference key="15">
    <citation type="journal article" date="2011" name="Blood">
        <title>Knockdown of Hspa9, a del(5q31.2) gene, results in a decrease in hematopoietic progenitors in mice.</title>
        <authorList>
            <person name="Chen T.H."/>
            <person name="Kambal A."/>
            <person name="Krysiak K."/>
            <person name="Walshauser M.A."/>
            <person name="Raju G."/>
            <person name="Tibbitts J.F."/>
            <person name="Walter M.J."/>
        </authorList>
    </citation>
    <scope>FUNCTION</scope>
</reference>
<reference key="16">
    <citation type="journal article" date="2013" name="Mol. Cell">
        <title>SIRT5-mediated lysine desuccinylation impacts diverse metabolic pathways.</title>
        <authorList>
            <person name="Park J."/>
            <person name="Chen Y."/>
            <person name="Tishkoff D.X."/>
            <person name="Peng C."/>
            <person name="Tan M."/>
            <person name="Dai L."/>
            <person name="Xie Z."/>
            <person name="Zhang Y."/>
            <person name="Zwaans B.M."/>
            <person name="Skinner M.E."/>
            <person name="Lombard D.B."/>
            <person name="Zhao Y."/>
        </authorList>
    </citation>
    <scope>ACETYLATION [LARGE SCALE ANALYSIS] AT LYS-135; LYS-300; LYS-360 AND LYS-567</scope>
    <scope>SUCCINYLATION [LARGE SCALE ANALYSIS] AT LYS-135; LYS-138; LYS-206; LYS-300; LYS-360; LYS-368; LYS-394; LYS-567; LYS-600; LYS-610 AND LYS-646</scope>
    <scope>IDENTIFICATION BY MASS SPECTROMETRY [LARGE SCALE ANALYSIS]</scope>
    <source>
        <tissue>Embryonic fibroblast</tissue>
        <tissue>Liver</tissue>
    </source>
</reference>
<reference key="17">
    <citation type="journal article" date="2013" name="Proc. Natl. Acad. Sci. U.S.A.">
        <title>Label-free quantitative proteomics of the lysine acetylome in mitochondria identifies substrates of SIRT3 in metabolic pathways.</title>
        <authorList>
            <person name="Rardin M.J."/>
            <person name="Newman J.C."/>
            <person name="Held J.M."/>
            <person name="Cusack M.P."/>
            <person name="Sorensen D.J."/>
            <person name="Li B."/>
            <person name="Schilling B."/>
            <person name="Mooney S.D."/>
            <person name="Kahn C.R."/>
            <person name="Verdin E."/>
            <person name="Gibson B.W."/>
        </authorList>
    </citation>
    <scope>ACETYLATION [LARGE SCALE ANALYSIS] AT LYS-76; LYS-135; LYS-138; LYS-206; LYS-234; LYS-288; LYS-300; LYS-360; LYS-567; LYS-600; LYS-612 AND LYS-646</scope>
    <scope>IDENTIFICATION BY MASS SPECTROMETRY [LARGE SCALE ANALYSIS]</scope>
    <source>
        <tissue>Liver</tissue>
    </source>
</reference>
<reference key="18">
    <citation type="journal article" date="2014" name="Blood">
        <title>Mortalin and DJ-1 coordinately regulate hematopoietic stem cell function through the control of oxidative stress.</title>
        <authorList>
            <person name="Tai-Nagara I."/>
            <person name="Matsuoka S."/>
            <person name="Ariga H."/>
            <person name="Suda T."/>
        </authorList>
    </citation>
    <scope>FUNCTION</scope>
</reference>
<reference key="19">
    <citation type="journal article" date="2016" name="Mitochondrion">
        <title>Mitochondrial Hspa9/Mortalin regulates erythroid differentiation via iron-sulfur cluster assembly.</title>
        <authorList>
            <person name="Shan Y."/>
            <person name="Cortopassi G."/>
        </authorList>
    </citation>
    <scope>FUNCTION</scope>
</reference>
<reference key="20">
    <citation type="journal article" date="2018" name="BMC Nephrol.">
        <title>IP3R-Grp75-VDAC1-MCU calcium regulation axis antagonists protect podocytes from apoptosis and decrease proteinuria in an Adriamycin nephropathy rat model.</title>
        <authorList>
            <person name="Xu H."/>
            <person name="Guan N."/>
            <person name="Ren Y.L."/>
            <person name="Wei Q.J."/>
            <person name="Tao Y.H."/>
            <person name="Yang G.S."/>
            <person name="Liu X.Y."/>
            <person name="Bu D.F."/>
            <person name="Zhang Y."/>
            <person name="Zhu S.N."/>
        </authorList>
    </citation>
    <scope>FUNCTION</scope>
</reference>
<name>HSPA9_MOUSE</name>
<accession>P38647</accession>
<accession>Q3TW93</accession>
<accession>Q3UVN1</accession>
<accession>Q3V015</accession>
<accession>Q7TSZ0</accession>
<accession>Q9CQ05</accession>
<evidence type="ECO:0000250" key="1"/>
<evidence type="ECO:0000250" key="2">
    <source>
        <dbReference type="UniProtKB" id="P0DMV8"/>
    </source>
</evidence>
<evidence type="ECO:0000250" key="3">
    <source>
        <dbReference type="UniProtKB" id="P11021"/>
    </source>
</evidence>
<evidence type="ECO:0000250" key="4">
    <source>
        <dbReference type="UniProtKB" id="P38646"/>
    </source>
</evidence>
<evidence type="ECO:0000250" key="5">
    <source>
        <dbReference type="UniProtKB" id="P48721"/>
    </source>
</evidence>
<evidence type="ECO:0000256" key="6">
    <source>
        <dbReference type="SAM" id="MobiDB-lite"/>
    </source>
</evidence>
<evidence type="ECO:0000269" key="7">
    <source>
    </source>
</evidence>
<evidence type="ECO:0000269" key="8">
    <source>
    </source>
</evidence>
<evidence type="ECO:0000269" key="9">
    <source>
    </source>
</evidence>
<evidence type="ECO:0000269" key="10">
    <source>
    </source>
</evidence>
<evidence type="ECO:0000269" key="11">
    <source>
    </source>
</evidence>
<evidence type="ECO:0000269" key="12">
    <source>
    </source>
</evidence>
<evidence type="ECO:0000269" key="13">
    <source>
    </source>
</evidence>
<evidence type="ECO:0000269" key="14">
    <source>
    </source>
</evidence>
<evidence type="ECO:0000269" key="15">
    <source>
    </source>
</evidence>
<evidence type="ECO:0000303" key="16">
    <source>
    </source>
</evidence>
<evidence type="ECO:0000305" key="17"/>
<evidence type="ECO:0000312" key="18">
    <source>
        <dbReference type="MGI" id="MGI:96245"/>
    </source>
</evidence>
<evidence type="ECO:0007744" key="19">
    <source>
    </source>
</evidence>
<evidence type="ECO:0007744" key="20">
    <source>
    </source>
</evidence>
<gene>
    <name evidence="18" type="primary">Hspa9</name>
    <name type="synonym">Grp75</name>
    <name type="synonym">Hsp74</name>
    <name type="synonym">Hspa9a</name>
</gene>
<feature type="transit peptide" description="Mitochondrion" evidence="11">
    <location>
        <begin position="1"/>
        <end position="46"/>
    </location>
</feature>
<feature type="chain" id="PRO_0000013564" description="Stress-70 protein, mitochondrial">
    <location>
        <begin position="47"/>
        <end position="679"/>
    </location>
</feature>
<feature type="region of interest" description="Interaction with NFS1" evidence="4">
    <location>
        <begin position="1"/>
        <end position="432"/>
    </location>
</feature>
<feature type="region of interest" description="Nucleotide-binding domain (NBD)" evidence="4">
    <location>
        <begin position="63"/>
        <end position="431"/>
    </location>
</feature>
<feature type="region of interest" description="Interaction with FXN and ISCU" evidence="4">
    <location>
        <begin position="432"/>
        <end position="679"/>
    </location>
</feature>
<feature type="region of interest" description="Interdomain linker" evidence="4">
    <location>
        <begin position="432"/>
        <end position="441"/>
    </location>
</feature>
<feature type="region of interest" description="Substrate-binding domain (SBD)" evidence="4">
    <location>
        <begin position="442"/>
        <end position="679"/>
    </location>
</feature>
<feature type="region of interest" description="Disordered" evidence="6">
    <location>
        <begin position="656"/>
        <end position="679"/>
    </location>
</feature>
<feature type="compositionally biased region" description="Basic and acidic residues" evidence="6">
    <location>
        <begin position="669"/>
        <end position="679"/>
    </location>
</feature>
<feature type="binding site" evidence="4">
    <location>
        <position position="63"/>
    </location>
    <ligand>
        <name>ADP</name>
        <dbReference type="ChEBI" id="CHEBI:456216"/>
    </ligand>
</feature>
<feature type="binding site" evidence="4">
    <location>
        <position position="64"/>
    </location>
    <ligand>
        <name>ADP</name>
        <dbReference type="ChEBI" id="CHEBI:456216"/>
    </ligand>
</feature>
<feature type="binding site" evidence="4">
    <location>
        <position position="313"/>
    </location>
    <ligand>
        <name>ADP</name>
        <dbReference type="ChEBI" id="CHEBI:456216"/>
    </ligand>
</feature>
<feature type="binding site" evidence="4">
    <location>
        <position position="316"/>
    </location>
    <ligand>
        <name>ADP</name>
        <dbReference type="ChEBI" id="CHEBI:456216"/>
    </ligand>
</feature>
<feature type="binding site" evidence="4">
    <location>
        <position position="320"/>
    </location>
    <ligand>
        <name>ADP</name>
        <dbReference type="ChEBI" id="CHEBI:456216"/>
    </ligand>
</feature>
<feature type="binding site" evidence="4">
    <location>
        <position position="388"/>
    </location>
    <ligand>
        <name>ADP</name>
        <dbReference type="ChEBI" id="CHEBI:456216"/>
    </ligand>
</feature>
<feature type="binding site" evidence="4">
    <location>
        <position position="391"/>
    </location>
    <ligand>
        <name>ADP</name>
        <dbReference type="ChEBI" id="CHEBI:456216"/>
    </ligand>
</feature>
<feature type="modified residue" description="N6-acetyllysine" evidence="19">
    <location>
        <position position="76"/>
    </location>
</feature>
<feature type="modified residue" description="Phosphothreonine" evidence="4">
    <location>
        <position position="87"/>
    </location>
</feature>
<feature type="modified residue" description="N6-acetyllysine; alternate" evidence="19 20">
    <location>
        <position position="135"/>
    </location>
</feature>
<feature type="modified residue" description="N6-succinyllysine; alternate" evidence="20">
    <location>
        <position position="135"/>
    </location>
</feature>
<feature type="modified residue" description="N6-acetyllysine; alternate" evidence="19">
    <location>
        <position position="138"/>
    </location>
</feature>
<feature type="modified residue" description="N6-succinyllysine; alternate" evidence="20">
    <location>
        <position position="138"/>
    </location>
</feature>
<feature type="modified residue" description="N6-acetyllysine" evidence="4">
    <location>
        <position position="143"/>
    </location>
</feature>
<feature type="modified residue" description="N6-acetyllysine; alternate" evidence="19">
    <location>
        <position position="206"/>
    </location>
</feature>
<feature type="modified residue" description="N6-malonyllysine; alternate" evidence="1">
    <location>
        <position position="206"/>
    </location>
</feature>
<feature type="modified residue" description="N6-succinyllysine; alternate" evidence="20">
    <location>
        <position position="206"/>
    </location>
</feature>
<feature type="modified residue" description="N6-acetyllysine" evidence="19">
    <location>
        <position position="234"/>
    </location>
</feature>
<feature type="modified residue" description="N6-acetyllysine" evidence="19">
    <location>
        <position position="288"/>
    </location>
</feature>
<feature type="modified residue" description="N6-acetyllysine; alternate" evidence="19 20">
    <location>
        <position position="300"/>
    </location>
</feature>
<feature type="modified residue" description="N6-succinyllysine; alternate" evidence="20">
    <location>
        <position position="300"/>
    </location>
</feature>
<feature type="modified residue" description="N6-acetyllysine; alternate" evidence="19 20">
    <location>
        <position position="360"/>
    </location>
</feature>
<feature type="modified residue" description="N6-succinyllysine; alternate" evidence="20">
    <location>
        <position position="360"/>
    </location>
</feature>
<feature type="modified residue" description="N6-succinyllysine" evidence="20">
    <location>
        <position position="368"/>
    </location>
</feature>
<feature type="modified residue" description="N6-succinyllysine" evidence="20">
    <location>
        <position position="394"/>
    </location>
</feature>
<feature type="modified residue" description="Phosphoserine" evidence="4">
    <location>
        <position position="408"/>
    </location>
</feature>
<feature type="modified residue" description="Omega-N-methylarginine" evidence="4">
    <location>
        <position position="513"/>
    </location>
</feature>
<feature type="modified residue" description="N6-acetyllysine; alternate" evidence="19 20">
    <location>
        <position position="567"/>
    </location>
</feature>
<feature type="modified residue" description="N6-succinyllysine; alternate" evidence="20">
    <location>
        <position position="567"/>
    </location>
</feature>
<feature type="modified residue" description="N6-acetyllysine; alternate" evidence="19">
    <location>
        <position position="600"/>
    </location>
</feature>
<feature type="modified residue" description="N6-succinyllysine; alternate" evidence="20">
    <location>
        <position position="600"/>
    </location>
</feature>
<feature type="modified residue" description="N6-succinyllysine" evidence="20">
    <location>
        <position position="610"/>
    </location>
</feature>
<feature type="modified residue" description="N6-acetyllysine" evidence="19">
    <location>
        <position position="612"/>
    </location>
</feature>
<feature type="modified residue" description="N6-acetyllysine; alternate" evidence="19">
    <location>
        <position position="646"/>
    </location>
</feature>
<feature type="modified residue" description="N6-succinyllysine; alternate" evidence="20">
    <location>
        <position position="646"/>
    </location>
</feature>
<feature type="sequence variant" description="In MOT-1." evidence="13">
    <original>M</original>
    <variation>V</variation>
    <location>
        <position position="618"/>
    </location>
</feature>
<feature type="sequence variant" description="In MOT-1." evidence="13">
    <original>G</original>
    <variation>R</variation>
    <location>
        <position position="624"/>
    </location>
</feature>
<feature type="sequence conflict" description="In Ref. 4; AA sequence." evidence="17" ref="4">
    <original>S</original>
    <variation>T</variation>
    <location>
        <position position="5"/>
    </location>
</feature>
<feature type="sequence conflict" description="In Ref. 7; BAE21690." evidence="17" ref="7">
    <original>L</original>
    <variation>Q</variation>
    <location>
        <position position="78"/>
    </location>
</feature>
<feature type="sequence conflict" description="In Ref. 4; AA sequence." evidence="17" ref="4">
    <original>K</original>
    <variation>R</variation>
    <location>
        <position position="106"/>
    </location>
</feature>
<feature type="sequence conflict" description="In Ref. 7; BAE35373." evidence="17" ref="7">
    <original>G</original>
    <variation>S</variation>
    <location>
        <position position="150"/>
    </location>
</feature>
<feature type="sequence conflict" description="In Ref. 4; AA sequence." evidence="17" ref="4">
    <original>F</original>
    <variation>S</variation>
    <location>
        <position position="522"/>
    </location>
</feature>
<dbReference type="EC" id="3.6.4.10" evidence="4"/>
<dbReference type="EMBL" id="D11089">
    <property type="protein sequence ID" value="BAA01862.2"/>
    <property type="molecule type" value="mRNA"/>
</dbReference>
<dbReference type="EMBL" id="L06896">
    <property type="status" value="NOT_ANNOTATED_CDS"/>
    <property type="molecule type" value="mRNA"/>
</dbReference>
<dbReference type="EMBL" id="D17666">
    <property type="protein sequence ID" value="BAA04548.1"/>
    <property type="molecule type" value="Genomic_DNA"/>
</dbReference>
<dbReference type="EMBL" id="D17556">
    <property type="protein sequence ID" value="BAA04493.1"/>
    <property type="molecule type" value="mRNA"/>
</dbReference>
<dbReference type="EMBL" id="AK004946">
    <property type="protein sequence ID" value="BAB23690.1"/>
    <property type="molecule type" value="mRNA"/>
</dbReference>
<dbReference type="EMBL" id="AK002634">
    <property type="protein sequence ID" value="BAB22248.1"/>
    <property type="molecule type" value="mRNA"/>
</dbReference>
<dbReference type="EMBL" id="AK133501">
    <property type="protein sequence ID" value="BAE21690.1"/>
    <property type="molecule type" value="mRNA"/>
</dbReference>
<dbReference type="EMBL" id="AK137109">
    <property type="protein sequence ID" value="BAE23238.1"/>
    <property type="molecule type" value="mRNA"/>
</dbReference>
<dbReference type="EMBL" id="AK145965">
    <property type="protein sequence ID" value="BAE26790.1"/>
    <property type="molecule type" value="mRNA"/>
</dbReference>
<dbReference type="EMBL" id="AK159791">
    <property type="protein sequence ID" value="BAE35373.1"/>
    <property type="molecule type" value="mRNA"/>
</dbReference>
<dbReference type="EMBL" id="AK165958">
    <property type="protein sequence ID" value="BAE38486.1"/>
    <property type="molecule type" value="mRNA"/>
</dbReference>
<dbReference type="EMBL" id="AK167856">
    <property type="protein sequence ID" value="BAE39874.1"/>
    <property type="molecule type" value="mRNA"/>
</dbReference>
<dbReference type="EMBL" id="AC114820">
    <property type="status" value="NOT_ANNOTATED_CDS"/>
    <property type="molecule type" value="Genomic_DNA"/>
</dbReference>
<dbReference type="EMBL" id="AC131675">
    <property type="status" value="NOT_ANNOTATED_CDS"/>
    <property type="molecule type" value="Genomic_DNA"/>
</dbReference>
<dbReference type="EMBL" id="CH466557">
    <property type="protein sequence ID" value="EDK97122.1"/>
    <property type="molecule type" value="Genomic_DNA"/>
</dbReference>
<dbReference type="EMBL" id="BC052727">
    <property type="protein sequence ID" value="AAH52727.1"/>
    <property type="molecule type" value="mRNA"/>
</dbReference>
<dbReference type="EMBL" id="BC057343">
    <property type="protein sequence ID" value="AAH57343.1"/>
    <property type="molecule type" value="mRNA"/>
</dbReference>
<dbReference type="CCDS" id="CCDS29138.1"/>
<dbReference type="PIR" id="S39839">
    <property type="entry name" value="A48127"/>
</dbReference>
<dbReference type="RefSeq" id="NP_034611.2">
    <property type="nucleotide sequence ID" value="NM_010481.2"/>
</dbReference>
<dbReference type="SMR" id="P38647"/>
<dbReference type="BioGRID" id="200457">
    <property type="interactions" value="95"/>
</dbReference>
<dbReference type="FunCoup" id="P38647">
    <property type="interactions" value="2783"/>
</dbReference>
<dbReference type="IntAct" id="P38647">
    <property type="interactions" value="29"/>
</dbReference>
<dbReference type="MINT" id="P38647"/>
<dbReference type="STRING" id="10090.ENSMUSP00000025217"/>
<dbReference type="GlyGen" id="P38647">
    <property type="glycosylation" value="3 sites, 2 N-linked glycans (2 sites), 1 O-linked glycan (1 site)"/>
</dbReference>
<dbReference type="iPTMnet" id="P38647"/>
<dbReference type="PhosphoSitePlus" id="P38647"/>
<dbReference type="SwissPalm" id="P38647"/>
<dbReference type="REPRODUCTION-2DPAGE" id="IPI00133903"/>
<dbReference type="REPRODUCTION-2DPAGE" id="P38647"/>
<dbReference type="jPOST" id="P38647"/>
<dbReference type="PaxDb" id="10090-ENSMUSP00000025217"/>
<dbReference type="PeptideAtlas" id="P38647"/>
<dbReference type="ProteomicsDB" id="271100"/>
<dbReference type="Pumba" id="P38647"/>
<dbReference type="ABCD" id="P38647">
    <property type="antibodies" value="1 sequenced antibody"/>
</dbReference>
<dbReference type="Antibodypedia" id="646">
    <property type="antibodies" value="769 antibodies from 48 providers"/>
</dbReference>
<dbReference type="DNASU" id="15526"/>
<dbReference type="Ensembl" id="ENSMUST00000025217.11">
    <property type="protein sequence ID" value="ENSMUSP00000025217.9"/>
    <property type="gene ID" value="ENSMUSG00000024359.11"/>
</dbReference>
<dbReference type="GeneID" id="15526"/>
<dbReference type="KEGG" id="mmu:15526"/>
<dbReference type="UCSC" id="uc008elv.2">
    <property type="organism name" value="mouse"/>
</dbReference>
<dbReference type="AGR" id="MGI:96245"/>
<dbReference type="CTD" id="3313"/>
<dbReference type="MGI" id="MGI:96245">
    <property type="gene designation" value="Hspa9"/>
</dbReference>
<dbReference type="VEuPathDB" id="HostDB:ENSMUSG00000024359"/>
<dbReference type="eggNOG" id="KOG0102">
    <property type="taxonomic scope" value="Eukaryota"/>
</dbReference>
<dbReference type="GeneTree" id="ENSGT00920000149123"/>
<dbReference type="HOGENOM" id="CLU_005965_2_1_1"/>
<dbReference type="InParanoid" id="P38647"/>
<dbReference type="OMA" id="MGTDWKI"/>
<dbReference type="OrthoDB" id="2401965at2759"/>
<dbReference type="PhylomeDB" id="P38647"/>
<dbReference type="TreeFam" id="TF105046"/>
<dbReference type="Reactome" id="R-MMU-3371453">
    <property type="pathway name" value="Regulation of HSF1-mediated heat shock response"/>
</dbReference>
<dbReference type="Reactome" id="R-MMU-6799198">
    <property type="pathway name" value="Complex I biogenesis"/>
</dbReference>
<dbReference type="Reactome" id="R-MMU-9837999">
    <property type="pathway name" value="Mitochondrial protein degradation"/>
</dbReference>
<dbReference type="Reactome" id="R-MMU-9865881">
    <property type="pathway name" value="Complex III assembly"/>
</dbReference>
<dbReference type="BioGRID-ORCS" id="15526">
    <property type="hits" value="24 hits in 66 CRISPR screens"/>
</dbReference>
<dbReference type="CD-CODE" id="CE726F99">
    <property type="entry name" value="Postsynaptic density"/>
</dbReference>
<dbReference type="ChiTaRS" id="Hspa9">
    <property type="organism name" value="mouse"/>
</dbReference>
<dbReference type="PRO" id="PR:P38647"/>
<dbReference type="Proteomes" id="UP000000589">
    <property type="component" value="Chromosome 18"/>
</dbReference>
<dbReference type="RNAct" id="P38647">
    <property type="molecule type" value="protein"/>
</dbReference>
<dbReference type="Bgee" id="ENSMUSG00000024359">
    <property type="expression patterns" value="Expressed in ileal epithelium and 269 other cell types or tissues"/>
</dbReference>
<dbReference type="GO" id="GO:0005737">
    <property type="term" value="C:cytoplasm"/>
    <property type="evidence" value="ECO:0000304"/>
    <property type="project" value="MGI"/>
</dbReference>
<dbReference type="GO" id="GO:0005759">
    <property type="term" value="C:mitochondrial matrix"/>
    <property type="evidence" value="ECO:0000314"/>
    <property type="project" value="FlyBase"/>
</dbReference>
<dbReference type="GO" id="GO:0042645">
    <property type="term" value="C:mitochondrial nucleoid"/>
    <property type="evidence" value="ECO:0007669"/>
    <property type="project" value="Ensembl"/>
</dbReference>
<dbReference type="GO" id="GO:0005739">
    <property type="term" value="C:mitochondrion"/>
    <property type="evidence" value="ECO:0000314"/>
    <property type="project" value="MGI"/>
</dbReference>
<dbReference type="GO" id="GO:0043209">
    <property type="term" value="C:myelin sheath"/>
    <property type="evidence" value="ECO:0007005"/>
    <property type="project" value="UniProtKB"/>
</dbReference>
<dbReference type="GO" id="GO:0005730">
    <property type="term" value="C:nucleolus"/>
    <property type="evidence" value="ECO:0007669"/>
    <property type="project" value="UniProtKB-SubCell"/>
</dbReference>
<dbReference type="GO" id="GO:0005524">
    <property type="term" value="F:ATP binding"/>
    <property type="evidence" value="ECO:0007669"/>
    <property type="project" value="UniProtKB-KW"/>
</dbReference>
<dbReference type="GO" id="GO:0016887">
    <property type="term" value="F:ATP hydrolysis activity"/>
    <property type="evidence" value="ECO:0000250"/>
    <property type="project" value="UniProtKB"/>
</dbReference>
<dbReference type="GO" id="GO:0140662">
    <property type="term" value="F:ATP-dependent protein folding chaperone"/>
    <property type="evidence" value="ECO:0007669"/>
    <property type="project" value="InterPro"/>
</dbReference>
<dbReference type="GO" id="GO:0019899">
    <property type="term" value="F:enzyme binding"/>
    <property type="evidence" value="ECO:0000353"/>
    <property type="project" value="UniProtKB"/>
</dbReference>
<dbReference type="GO" id="GO:0031625">
    <property type="term" value="F:ubiquitin protein ligase binding"/>
    <property type="evidence" value="ECO:0007669"/>
    <property type="project" value="Ensembl"/>
</dbReference>
<dbReference type="GO" id="GO:0051082">
    <property type="term" value="F:unfolded protein binding"/>
    <property type="evidence" value="ECO:0007669"/>
    <property type="project" value="InterPro"/>
</dbReference>
<dbReference type="GO" id="GO:0036444">
    <property type="term" value="P:calcium import into the mitochondrion"/>
    <property type="evidence" value="ECO:0000250"/>
    <property type="project" value="UniProtKB"/>
</dbReference>
<dbReference type="GO" id="GO:0030218">
    <property type="term" value="P:erythrocyte differentiation"/>
    <property type="evidence" value="ECO:0000250"/>
    <property type="project" value="UniProtKB"/>
</dbReference>
<dbReference type="GO" id="GO:0016226">
    <property type="term" value="P:iron-sulfur cluster assembly"/>
    <property type="evidence" value="ECO:0000315"/>
    <property type="project" value="UniProtKB"/>
</dbReference>
<dbReference type="GO" id="GO:0045647">
    <property type="term" value="P:negative regulation of erythrocyte differentiation"/>
    <property type="evidence" value="ECO:0000250"/>
    <property type="project" value="UniProtKB"/>
</dbReference>
<dbReference type="GO" id="GO:1902037">
    <property type="term" value="P:negative regulation of hematopoietic stem cell differentiation"/>
    <property type="evidence" value="ECO:0000315"/>
    <property type="project" value="UniProtKB"/>
</dbReference>
<dbReference type="GO" id="GO:1903707">
    <property type="term" value="P:negative regulation of hemopoiesis"/>
    <property type="evidence" value="ECO:0000315"/>
    <property type="project" value="UniProtKB"/>
</dbReference>
<dbReference type="GO" id="GO:0043065">
    <property type="term" value="P:positive regulation of apoptotic process"/>
    <property type="evidence" value="ECO:0007669"/>
    <property type="project" value="Ensembl"/>
</dbReference>
<dbReference type="GO" id="GO:0006611">
    <property type="term" value="P:protein export from nucleus"/>
    <property type="evidence" value="ECO:0000314"/>
    <property type="project" value="MGI"/>
</dbReference>
<dbReference type="GO" id="GO:0045646">
    <property type="term" value="P:regulation of erythrocyte differentiation"/>
    <property type="evidence" value="ECO:0000250"/>
    <property type="project" value="UniProtKB"/>
</dbReference>
<dbReference type="CDD" id="cd11733">
    <property type="entry name" value="ASKHA_NBD_HSP70_HSPA9"/>
    <property type="match status" value="1"/>
</dbReference>
<dbReference type="FunFam" id="2.60.34.10:FF:000014">
    <property type="entry name" value="Chaperone protein DnaK HSP70"/>
    <property type="match status" value="1"/>
</dbReference>
<dbReference type="FunFam" id="3.30.420.40:FF:000020">
    <property type="entry name" value="Chaperone protein HscA homolog"/>
    <property type="match status" value="1"/>
</dbReference>
<dbReference type="FunFam" id="3.30.30.30:FF:000003">
    <property type="entry name" value="Heat shock protein 9"/>
    <property type="match status" value="1"/>
</dbReference>
<dbReference type="FunFam" id="3.30.420.40:FF:000004">
    <property type="entry name" value="Molecular chaperone DnaK"/>
    <property type="match status" value="1"/>
</dbReference>
<dbReference type="FunFam" id="3.90.640.10:FF:000003">
    <property type="entry name" value="Molecular chaperone DnaK"/>
    <property type="match status" value="1"/>
</dbReference>
<dbReference type="FunFam" id="1.20.1270.10:FF:000011">
    <property type="entry name" value="stress-70 protein, mitochondrial isoform X1"/>
    <property type="match status" value="1"/>
</dbReference>
<dbReference type="Gene3D" id="1.20.1270.10">
    <property type="match status" value="1"/>
</dbReference>
<dbReference type="Gene3D" id="3.30.30.30">
    <property type="match status" value="1"/>
</dbReference>
<dbReference type="Gene3D" id="3.30.420.40">
    <property type="match status" value="2"/>
</dbReference>
<dbReference type="Gene3D" id="3.90.640.10">
    <property type="entry name" value="Actin, Chain A, domain 4"/>
    <property type="match status" value="1"/>
</dbReference>
<dbReference type="Gene3D" id="2.60.34.10">
    <property type="entry name" value="Substrate Binding Domain Of DNAk, Chain A, domain 1"/>
    <property type="match status" value="1"/>
</dbReference>
<dbReference type="HAMAP" id="MF_00332">
    <property type="entry name" value="DnaK"/>
    <property type="match status" value="1"/>
</dbReference>
<dbReference type="InterPro" id="IPR043129">
    <property type="entry name" value="ATPase_NBD"/>
</dbReference>
<dbReference type="InterPro" id="IPR012725">
    <property type="entry name" value="Chaperone_DnaK"/>
</dbReference>
<dbReference type="InterPro" id="IPR018181">
    <property type="entry name" value="Heat_shock_70_CS"/>
</dbReference>
<dbReference type="InterPro" id="IPR029048">
    <property type="entry name" value="HSP70_C_sf"/>
</dbReference>
<dbReference type="InterPro" id="IPR029047">
    <property type="entry name" value="HSP70_peptide-bd_sf"/>
</dbReference>
<dbReference type="InterPro" id="IPR013126">
    <property type="entry name" value="Hsp_70_fam"/>
</dbReference>
<dbReference type="NCBIfam" id="NF001413">
    <property type="entry name" value="PRK00290.1"/>
    <property type="match status" value="1"/>
</dbReference>
<dbReference type="NCBIfam" id="NF003520">
    <property type="entry name" value="PRK05183.1"/>
    <property type="match status" value="1"/>
</dbReference>
<dbReference type="NCBIfam" id="TIGR02350">
    <property type="entry name" value="prok_dnaK"/>
    <property type="match status" value="1"/>
</dbReference>
<dbReference type="PANTHER" id="PTHR19375">
    <property type="entry name" value="HEAT SHOCK PROTEIN 70KDA"/>
    <property type="match status" value="1"/>
</dbReference>
<dbReference type="Pfam" id="PF00012">
    <property type="entry name" value="HSP70"/>
    <property type="match status" value="1"/>
</dbReference>
<dbReference type="PRINTS" id="PR00301">
    <property type="entry name" value="HEATSHOCK70"/>
</dbReference>
<dbReference type="SUPFAM" id="SSF53067">
    <property type="entry name" value="Actin-like ATPase domain"/>
    <property type="match status" value="2"/>
</dbReference>
<dbReference type="SUPFAM" id="SSF100920">
    <property type="entry name" value="Heat shock protein 70kD (HSP70), peptide-binding domain"/>
    <property type="match status" value="1"/>
</dbReference>
<dbReference type="PROSITE" id="PS00297">
    <property type="entry name" value="HSP70_1"/>
    <property type="match status" value="1"/>
</dbReference>
<dbReference type="PROSITE" id="PS00329">
    <property type="entry name" value="HSP70_2"/>
    <property type="match status" value="1"/>
</dbReference>
<dbReference type="PROSITE" id="PS01036">
    <property type="entry name" value="HSP70_3"/>
    <property type="match status" value="1"/>
</dbReference>
<sequence>MISASRAAAARLVGTAASRSPAAARPQDGWNGLSHEAFRFVSRRDYASEAIKGAVVGIDLGTTNSCVAVMEGKQAKVLENAEGARTTPSVVAFTADGERLVGMPAKRQAVTNPNNTFYATKRLIGRRYDDPEVQKDTKNVPFKIVRASNGDAWVEAHGKLYSPSQIGAFVLMKMKETAENYLGHTAKNAVITVPAYFNDSQRQATKDAGQISGLNVLRVINEPTAAALAYGLDKSEDKVIAVYDLGGGTFDISILEIQKGVFEVKSTNGDTFLGGEDFDQALLRHIVKEFKRETGVDLTKDNMALQRVREAAEKAKCELSSSVQTDINLPYLTMDASGPKHLNMKLTRAQFEGIVTDLIKRTIAPCQKAMQDAEVSKSDIGEVILVGGMTRMPKVQQTVQDLFGRAPSKAVNPDEAVAIGAAIQGGVLAGDVTDVLLLDVTPLSLGIETLGGVFTKLINRNTTIPTKKSQVFSTAADGQTQVEIKVCQGEREMAGDNKLLGQFTLIGIPPAPRGVPQIEVTFDIDANGIVHVSAKDKGTGREQQIVIQSSGGLSKDDIENMVKNAEKYAEEDRRKKERVEAVNMAEGIIHDTETKMEEFKDQLPADECNKLKEEISKMRALLAGKDSETGENIRQAASSLQQASLKLFEMAYKKMASEREGSGSSGTGEQKEDQKEEKQ</sequence>
<proteinExistence type="evidence at protein level"/>
<protein>
    <recommendedName>
        <fullName evidence="17">Stress-70 protein, mitochondrial</fullName>
        <ecNumber evidence="4">3.6.4.10</ecNumber>
    </recommendedName>
    <alternativeName>
        <fullName>75 kDa glucose-regulated protein</fullName>
        <shortName>GRP-75</shortName>
    </alternativeName>
    <alternativeName>
        <fullName>Heat shock 70 kDa protein 9</fullName>
    </alternativeName>
    <alternativeName>
        <fullName>Mortalin</fullName>
    </alternativeName>
    <alternativeName>
        <fullName>Peptide-binding protein 74</fullName>
        <shortName evidence="16">PBP74</shortName>
    </alternativeName>
    <alternativeName>
        <fullName>p66 MOT</fullName>
    </alternativeName>
</protein>
<organism>
    <name type="scientific">Mus musculus</name>
    <name type="common">Mouse</name>
    <dbReference type="NCBI Taxonomy" id="10090"/>
    <lineage>
        <taxon>Eukaryota</taxon>
        <taxon>Metazoa</taxon>
        <taxon>Chordata</taxon>
        <taxon>Craniata</taxon>
        <taxon>Vertebrata</taxon>
        <taxon>Euteleostomi</taxon>
        <taxon>Mammalia</taxon>
        <taxon>Eutheria</taxon>
        <taxon>Euarchontoglires</taxon>
        <taxon>Glires</taxon>
        <taxon>Rodentia</taxon>
        <taxon>Myomorpha</taxon>
        <taxon>Muroidea</taxon>
        <taxon>Muridae</taxon>
        <taxon>Murinae</taxon>
        <taxon>Mus</taxon>
        <taxon>Mus</taxon>
    </lineage>
</organism>
<keyword id="KW-0007">Acetylation</keyword>
<keyword id="KW-0067">ATP-binding</keyword>
<keyword id="KW-0143">Chaperone</keyword>
<keyword id="KW-0963">Cytoplasm</keyword>
<keyword id="KW-0903">Direct protein sequencing</keyword>
<keyword id="KW-0378">Hydrolase</keyword>
<keyword id="KW-0488">Methylation</keyword>
<keyword id="KW-0496">Mitochondrion</keyword>
<keyword id="KW-0547">Nucleotide-binding</keyword>
<keyword id="KW-0539">Nucleus</keyword>
<keyword id="KW-0597">Phosphoprotein</keyword>
<keyword id="KW-1185">Reference proteome</keyword>
<keyword id="KW-0809">Transit peptide</keyword>